<accession>Q07717</accession>
<accession>Q8WN08</accession>
<keyword id="KW-0002">3D-structure</keyword>
<keyword id="KW-1015">Disulfide bond</keyword>
<keyword id="KW-0391">Immunity</keyword>
<keyword id="KW-0393">Immunoglobulin domain</keyword>
<keyword id="KW-0490">MHC I</keyword>
<keyword id="KW-1185">Reference proteome</keyword>
<keyword id="KW-0964">Secreted</keyword>
<keyword id="KW-0732">Signal</keyword>
<comment type="function">
    <text evidence="1">Component of the class I major histocompatibility complex (MHC). Involved in the presentation of peptide antigens to the immune system (By similarity).</text>
</comment>
<comment type="subunit">
    <text evidence="1">Heterodimer of an alpha chain and a beta chain. Beta-2-microglobulin is the beta-chain of major histocompatibility complex class I molecules (By similarity).</text>
</comment>
<comment type="subcellular location">
    <subcellularLocation>
        <location evidence="1">Secreted</location>
    </subcellularLocation>
</comment>
<comment type="similarity">
    <text evidence="3">Belongs to the beta-2-microglobulin family.</text>
</comment>
<proteinExistence type="evidence at protein level"/>
<organism>
    <name type="scientific">Sus scrofa</name>
    <name type="common">Pig</name>
    <dbReference type="NCBI Taxonomy" id="9823"/>
    <lineage>
        <taxon>Eukaryota</taxon>
        <taxon>Metazoa</taxon>
        <taxon>Chordata</taxon>
        <taxon>Craniata</taxon>
        <taxon>Vertebrata</taxon>
        <taxon>Euteleostomi</taxon>
        <taxon>Mammalia</taxon>
        <taxon>Eutheria</taxon>
        <taxon>Laurasiatheria</taxon>
        <taxon>Artiodactyla</taxon>
        <taxon>Suina</taxon>
        <taxon>Suidae</taxon>
        <taxon>Sus</taxon>
    </lineage>
</organism>
<evidence type="ECO:0000250" key="1"/>
<evidence type="ECO:0000255" key="2">
    <source>
        <dbReference type="PROSITE-ProRule" id="PRU00114"/>
    </source>
</evidence>
<evidence type="ECO:0000305" key="3"/>
<evidence type="ECO:0007829" key="4">
    <source>
        <dbReference type="PDB" id="5NQ0"/>
    </source>
</evidence>
<protein>
    <recommendedName>
        <fullName>Beta-2-microglobulin</fullName>
    </recommendedName>
    <alternativeName>
        <fullName>Lactollin</fullName>
    </alternativeName>
</protein>
<name>B2MG_PIG</name>
<sequence length="118" mass="13362">MAPLVALVLLGLLSLSGLDAVARPPKVQVYSRHPAENGKPNYLNCYVSGFHPPQIEIDLLKNGEKMNAEQSDLSFSKDWSFYLLVHTEFTPNAVDQYSCRVKHVTLDKPKIVKWDRDH</sequence>
<dbReference type="EMBL" id="L13854">
    <property type="protein sequence ID" value="AAA16252.1"/>
    <property type="molecule type" value="mRNA"/>
</dbReference>
<dbReference type="EMBL" id="F14868">
    <property type="protein sequence ID" value="CAA23304.1"/>
    <property type="molecule type" value="mRNA"/>
</dbReference>
<dbReference type="EMBL" id="AF452448">
    <property type="protein sequence ID" value="AAL48289.1"/>
    <property type="molecule type" value="Genomic_DNA"/>
</dbReference>
<dbReference type="PIR" id="I46609">
    <property type="entry name" value="I46609"/>
</dbReference>
<dbReference type="RefSeq" id="NP_999143.1">
    <property type="nucleotide sequence ID" value="NM_213978.1"/>
</dbReference>
<dbReference type="RefSeq" id="XP_013848513.1">
    <property type="nucleotide sequence ID" value="XM_013993059.1"/>
</dbReference>
<dbReference type="RefSeq" id="XP_013848514.1">
    <property type="nucleotide sequence ID" value="XM_013993060.1"/>
</dbReference>
<dbReference type="RefSeq" id="XP_020952021.1">
    <property type="nucleotide sequence ID" value="XM_021096362.1"/>
</dbReference>
<dbReference type="PDB" id="3QQ3">
    <property type="method" value="X-ray"/>
    <property type="resolution" value="2.59 A"/>
    <property type="chains" value="B/E=21-118"/>
</dbReference>
<dbReference type="PDB" id="3QQ4">
    <property type="method" value="X-ray"/>
    <property type="resolution" value="2.10 A"/>
    <property type="chains" value="B=21-118"/>
</dbReference>
<dbReference type="PDB" id="5H94">
    <property type="method" value="X-ray"/>
    <property type="resolution" value="1.48 A"/>
    <property type="chains" value="B/E=21-118"/>
</dbReference>
<dbReference type="PDB" id="5NPZ">
    <property type="method" value="X-ray"/>
    <property type="resolution" value="1.43 A"/>
    <property type="chains" value="B=21-118"/>
</dbReference>
<dbReference type="PDB" id="5NQ0">
    <property type="method" value="X-ray"/>
    <property type="resolution" value="1.10 A"/>
    <property type="chains" value="B=21-118"/>
</dbReference>
<dbReference type="PDB" id="5NQ2">
    <property type="method" value="X-ray"/>
    <property type="resolution" value="1.54 A"/>
    <property type="chains" value="B=21-118"/>
</dbReference>
<dbReference type="PDB" id="5YLX">
    <property type="method" value="X-ray"/>
    <property type="resolution" value="2.20 A"/>
    <property type="chains" value="B=21-118"/>
</dbReference>
<dbReference type="PDB" id="6A6H">
    <property type="method" value="X-ray"/>
    <property type="resolution" value="2.31 A"/>
    <property type="chains" value="B=21-118"/>
</dbReference>
<dbReference type="PDB" id="6KWK">
    <property type="method" value="X-ray"/>
    <property type="resolution" value="2.50 A"/>
    <property type="chains" value="B=21-118"/>
</dbReference>
<dbReference type="PDB" id="6KWL">
    <property type="method" value="X-ray"/>
    <property type="resolution" value="1.80 A"/>
    <property type="chains" value="B=21-118"/>
</dbReference>
<dbReference type="PDB" id="6KWN">
    <property type="method" value="X-ray"/>
    <property type="resolution" value="2.40 A"/>
    <property type="chains" value="B=21-118"/>
</dbReference>
<dbReference type="PDB" id="6KWO">
    <property type="method" value="X-ray"/>
    <property type="resolution" value="1.80 A"/>
    <property type="chains" value="B=22-118"/>
</dbReference>
<dbReference type="PDB" id="6LF8">
    <property type="method" value="X-ray"/>
    <property type="resolution" value="2.50 A"/>
    <property type="chains" value="B=22-118"/>
</dbReference>
<dbReference type="PDB" id="6LF9">
    <property type="method" value="X-ray"/>
    <property type="resolution" value="2.50 A"/>
    <property type="chains" value="B/E/H/K=22-118"/>
</dbReference>
<dbReference type="PDB" id="7EM9">
    <property type="method" value="X-ray"/>
    <property type="resolution" value="1.90 A"/>
    <property type="chains" value="B=21-118"/>
</dbReference>
<dbReference type="PDB" id="7EMA">
    <property type="method" value="X-ray"/>
    <property type="resolution" value="1.80 A"/>
    <property type="chains" value="B=21-118"/>
</dbReference>
<dbReference type="PDB" id="7EMB">
    <property type="method" value="X-ray"/>
    <property type="resolution" value="1.97 A"/>
    <property type="chains" value="B=21-118"/>
</dbReference>
<dbReference type="PDB" id="7EMC">
    <property type="method" value="X-ray"/>
    <property type="resolution" value="1.90 A"/>
    <property type="chains" value="B/E/H=21-118"/>
</dbReference>
<dbReference type="PDB" id="7EMD">
    <property type="method" value="X-ray"/>
    <property type="resolution" value="1.70 A"/>
    <property type="chains" value="B=21-118"/>
</dbReference>
<dbReference type="PDB" id="8GQV">
    <property type="method" value="X-ray"/>
    <property type="resolution" value="2.40 A"/>
    <property type="chains" value="B/E=21-118"/>
</dbReference>
<dbReference type="PDB" id="8GQW">
    <property type="method" value="X-ray"/>
    <property type="resolution" value="2.48 A"/>
    <property type="chains" value="B/E=21-118"/>
</dbReference>
<dbReference type="PDB" id="8JV0">
    <property type="method" value="X-ray"/>
    <property type="resolution" value="2.20 A"/>
    <property type="chains" value="B/E=21-118"/>
</dbReference>
<dbReference type="PDB" id="8W6L">
    <property type="method" value="X-ray"/>
    <property type="resolution" value="2.03 A"/>
    <property type="chains" value="B=21-118"/>
</dbReference>
<dbReference type="PDBsum" id="3QQ3"/>
<dbReference type="PDBsum" id="3QQ4"/>
<dbReference type="PDBsum" id="5H94"/>
<dbReference type="PDBsum" id="5NPZ"/>
<dbReference type="PDBsum" id="5NQ0"/>
<dbReference type="PDBsum" id="5NQ2"/>
<dbReference type="PDBsum" id="5YLX"/>
<dbReference type="PDBsum" id="6A6H"/>
<dbReference type="PDBsum" id="6KWK"/>
<dbReference type="PDBsum" id="6KWL"/>
<dbReference type="PDBsum" id="6KWN"/>
<dbReference type="PDBsum" id="6KWO"/>
<dbReference type="PDBsum" id="6LF8"/>
<dbReference type="PDBsum" id="6LF9"/>
<dbReference type="PDBsum" id="7EM9"/>
<dbReference type="PDBsum" id="7EMA"/>
<dbReference type="PDBsum" id="7EMB"/>
<dbReference type="PDBsum" id="7EMC"/>
<dbReference type="PDBsum" id="7EMD"/>
<dbReference type="PDBsum" id="8GQV"/>
<dbReference type="PDBsum" id="8GQW"/>
<dbReference type="PDBsum" id="8JV0"/>
<dbReference type="PDBsum" id="8W6L"/>
<dbReference type="SMR" id="Q07717"/>
<dbReference type="FunCoup" id="Q07717">
    <property type="interactions" value="388"/>
</dbReference>
<dbReference type="STRING" id="9823.ENSSSCP00000050390"/>
<dbReference type="PaxDb" id="9823-ENSSSCP00000005044"/>
<dbReference type="PeptideAtlas" id="Q07717"/>
<dbReference type="Ensembl" id="ENSSSCT00000061969.2">
    <property type="protein sequence ID" value="ENSSSCP00000052369.2"/>
    <property type="gene ID" value="ENSSSCG00000004687.5"/>
</dbReference>
<dbReference type="Ensembl" id="ENSSSCT00000084189.3">
    <property type="protein sequence ID" value="ENSSSCP00000063329.1"/>
    <property type="gene ID" value="ENSSSCG00000051899.2"/>
</dbReference>
<dbReference type="Ensembl" id="ENSSSCT00000107012.1">
    <property type="protein sequence ID" value="ENSSSCP00000081416.1"/>
    <property type="gene ID" value="ENSSSCG00000051899.2"/>
</dbReference>
<dbReference type="Ensembl" id="ENSSSCT00000107013.1">
    <property type="protein sequence ID" value="ENSSSCP00000081417.1"/>
    <property type="gene ID" value="ENSSSCG00000051899.2"/>
</dbReference>
<dbReference type="Ensembl" id="ENSSSCT00000107014.1">
    <property type="protein sequence ID" value="ENSSSCP00000081418.1"/>
    <property type="gene ID" value="ENSSSCG00000051899.2"/>
</dbReference>
<dbReference type="Ensembl" id="ENSSSCT00015109665.1">
    <property type="protein sequence ID" value="ENSSSCP00015046677.1"/>
    <property type="gene ID" value="ENSSSCG00015080622.1"/>
</dbReference>
<dbReference type="Ensembl" id="ENSSSCT00050104689.1">
    <property type="protein sequence ID" value="ENSSSCP00050045963.1"/>
    <property type="gene ID" value="ENSSSCG00050076230.1"/>
</dbReference>
<dbReference type="Ensembl" id="ENSSSCT00065072733.1">
    <property type="protein sequence ID" value="ENSSSCP00065031692.1"/>
    <property type="gene ID" value="ENSSSCG00065053119.1"/>
</dbReference>
<dbReference type="Ensembl" id="ENSSSCT00090055543">
    <property type="protein sequence ID" value="ENSSSCP00090034602"/>
    <property type="gene ID" value="ENSSSCG00090031415"/>
</dbReference>
<dbReference type="Ensembl" id="ENSSSCT00110064082">
    <property type="protein sequence ID" value="ENSSSCP00110044883"/>
    <property type="gene ID" value="ENSSSCG00110033643"/>
</dbReference>
<dbReference type="Ensembl" id="ENSSSCT00115026083">
    <property type="protein sequence ID" value="ENSSSCP00115024709"/>
    <property type="gene ID" value="ENSSSCG00115014985"/>
</dbReference>
<dbReference type="Ensembl" id="ENSSSCT00130058564">
    <property type="protein sequence ID" value="ENSSSCP00130042062"/>
    <property type="gene ID" value="ENSSSCG00130029899"/>
</dbReference>
<dbReference type="Ensembl" id="ENSSSCT00130058838">
    <property type="protein sequence ID" value="ENSSSCP00130042283"/>
    <property type="gene ID" value="ENSSSCG00130029972"/>
</dbReference>
<dbReference type="GeneID" id="110255236"/>
<dbReference type="GeneID" id="397033"/>
<dbReference type="KEGG" id="ssc:397033"/>
<dbReference type="CTD" id="567"/>
<dbReference type="VGNC" id="VGNC:110573">
    <property type="gene designation" value="B2M"/>
</dbReference>
<dbReference type="eggNOG" id="ENOG502S8GM">
    <property type="taxonomic scope" value="Eukaryota"/>
</dbReference>
<dbReference type="GeneTree" id="ENSGT00690000102227"/>
<dbReference type="HOGENOM" id="CLU_163066_0_0_1"/>
<dbReference type="InParanoid" id="Q07717"/>
<dbReference type="OMA" id="CYRSGFH"/>
<dbReference type="OrthoDB" id="9949628at2759"/>
<dbReference type="TreeFam" id="TF334167"/>
<dbReference type="Reactome" id="R-SSC-1236974">
    <property type="pathway name" value="ER-Phagosome pathway"/>
</dbReference>
<dbReference type="Reactome" id="R-SSC-1236977">
    <property type="pathway name" value="Endosomal/Vacuolar pathway"/>
</dbReference>
<dbReference type="Reactome" id="R-SSC-198933">
    <property type="pathway name" value="Immunoregulatory interactions between a Lymphoid and a non-Lymphoid cell"/>
</dbReference>
<dbReference type="Reactome" id="R-SSC-2172127">
    <property type="pathway name" value="DAP12 interactions"/>
</dbReference>
<dbReference type="Reactome" id="R-SSC-2424491">
    <property type="pathway name" value="DAP12 signaling"/>
</dbReference>
<dbReference type="Reactome" id="R-SSC-6798695">
    <property type="pathway name" value="Neutrophil degranulation"/>
</dbReference>
<dbReference type="Reactome" id="R-SSC-983170">
    <property type="pathway name" value="Antigen Presentation: Folding, assembly and peptide loading of class I MHC"/>
</dbReference>
<dbReference type="EvolutionaryTrace" id="Q07717"/>
<dbReference type="Proteomes" id="UP000008227">
    <property type="component" value="Chromosome 1"/>
</dbReference>
<dbReference type="Proteomes" id="UP000314985">
    <property type="component" value="Unplaced"/>
</dbReference>
<dbReference type="Proteomes" id="UP000694570">
    <property type="component" value="Unplaced"/>
</dbReference>
<dbReference type="Proteomes" id="UP000694571">
    <property type="component" value="Unplaced"/>
</dbReference>
<dbReference type="Proteomes" id="UP000694720">
    <property type="component" value="Unplaced"/>
</dbReference>
<dbReference type="Proteomes" id="UP000694722">
    <property type="component" value="Unplaced"/>
</dbReference>
<dbReference type="Proteomes" id="UP000694723">
    <property type="component" value="Unplaced"/>
</dbReference>
<dbReference type="Proteomes" id="UP000694724">
    <property type="component" value="Unplaced"/>
</dbReference>
<dbReference type="Proteomes" id="UP000694725">
    <property type="component" value="Unplaced"/>
</dbReference>
<dbReference type="Proteomes" id="UP000694726">
    <property type="component" value="Unplaced"/>
</dbReference>
<dbReference type="Proteomes" id="UP000694727">
    <property type="component" value="Unplaced"/>
</dbReference>
<dbReference type="Proteomes" id="UP000694728">
    <property type="component" value="Unplaced"/>
</dbReference>
<dbReference type="Bgee" id="ENSSSCG00000004687">
    <property type="expression patterns" value="Expressed in blood and 42 other cell types or tissues"/>
</dbReference>
<dbReference type="ExpressionAtlas" id="Q07717">
    <property type="expression patterns" value="baseline and differential"/>
</dbReference>
<dbReference type="GO" id="GO:0005576">
    <property type="term" value="C:extracellular region"/>
    <property type="evidence" value="ECO:0007669"/>
    <property type="project" value="UniProtKB-SubCell"/>
</dbReference>
<dbReference type="GO" id="GO:0031902">
    <property type="term" value="C:late endosome membrane"/>
    <property type="evidence" value="ECO:0000318"/>
    <property type="project" value="GO_Central"/>
</dbReference>
<dbReference type="GO" id="GO:0005765">
    <property type="term" value="C:lysosomal membrane"/>
    <property type="evidence" value="ECO:0000318"/>
    <property type="project" value="GO_Central"/>
</dbReference>
<dbReference type="GO" id="GO:0042612">
    <property type="term" value="C:MHC class I protein complex"/>
    <property type="evidence" value="ECO:0007669"/>
    <property type="project" value="UniProtKB-KW"/>
</dbReference>
<dbReference type="GO" id="GO:0042613">
    <property type="term" value="C:MHC class II protein complex"/>
    <property type="evidence" value="ECO:0000318"/>
    <property type="project" value="GO_Central"/>
</dbReference>
<dbReference type="GO" id="GO:0023026">
    <property type="term" value="F:MHC class II protein complex binding"/>
    <property type="evidence" value="ECO:0000318"/>
    <property type="project" value="GO_Central"/>
</dbReference>
<dbReference type="GO" id="GO:0042605">
    <property type="term" value="F:peptide antigen binding"/>
    <property type="evidence" value="ECO:0000318"/>
    <property type="project" value="GO_Central"/>
</dbReference>
<dbReference type="GO" id="GO:0019886">
    <property type="term" value="P:antigen processing and presentation of exogenous peptide antigen via MHC class II"/>
    <property type="evidence" value="ECO:0000318"/>
    <property type="project" value="GO_Central"/>
</dbReference>
<dbReference type="GO" id="GO:0002474">
    <property type="term" value="P:antigen processing and presentation of peptide antigen via MHC class I"/>
    <property type="evidence" value="ECO:0007669"/>
    <property type="project" value="UniProtKB-KW"/>
</dbReference>
<dbReference type="GO" id="GO:0006955">
    <property type="term" value="P:immune response"/>
    <property type="evidence" value="ECO:0007669"/>
    <property type="project" value="InterPro"/>
</dbReference>
<dbReference type="GO" id="GO:0002503">
    <property type="term" value="P:peptide antigen assembly with MHC class II protein complex"/>
    <property type="evidence" value="ECO:0000318"/>
    <property type="project" value="GO_Central"/>
</dbReference>
<dbReference type="GO" id="GO:0050778">
    <property type="term" value="P:positive regulation of immune response"/>
    <property type="evidence" value="ECO:0000318"/>
    <property type="project" value="GO_Central"/>
</dbReference>
<dbReference type="GO" id="GO:0050870">
    <property type="term" value="P:positive regulation of T cell activation"/>
    <property type="evidence" value="ECO:0000318"/>
    <property type="project" value="GO_Central"/>
</dbReference>
<dbReference type="CDD" id="cd05770">
    <property type="entry name" value="IgC1_beta2m"/>
    <property type="match status" value="1"/>
</dbReference>
<dbReference type="FunFam" id="2.60.40.10:FF:001005">
    <property type="entry name" value="Beta-2-microglobulin"/>
    <property type="match status" value="1"/>
</dbReference>
<dbReference type="Gene3D" id="2.60.40.10">
    <property type="entry name" value="Immunoglobulins"/>
    <property type="match status" value="1"/>
</dbReference>
<dbReference type="InterPro" id="IPR015707">
    <property type="entry name" value="B2Microglobulin"/>
</dbReference>
<dbReference type="InterPro" id="IPR007110">
    <property type="entry name" value="Ig-like_dom"/>
</dbReference>
<dbReference type="InterPro" id="IPR036179">
    <property type="entry name" value="Ig-like_dom_sf"/>
</dbReference>
<dbReference type="InterPro" id="IPR013783">
    <property type="entry name" value="Ig-like_fold"/>
</dbReference>
<dbReference type="InterPro" id="IPR003006">
    <property type="entry name" value="Ig/MHC_CS"/>
</dbReference>
<dbReference type="InterPro" id="IPR003597">
    <property type="entry name" value="Ig_C1-set"/>
</dbReference>
<dbReference type="InterPro" id="IPR050160">
    <property type="entry name" value="MHC/Immunoglobulin"/>
</dbReference>
<dbReference type="PANTHER" id="PTHR19944:SF62">
    <property type="entry name" value="BETA-2-MICROGLOBULIN"/>
    <property type="match status" value="1"/>
</dbReference>
<dbReference type="PANTHER" id="PTHR19944">
    <property type="entry name" value="MHC CLASS II-RELATED"/>
    <property type="match status" value="1"/>
</dbReference>
<dbReference type="Pfam" id="PF07654">
    <property type="entry name" value="C1-set"/>
    <property type="match status" value="1"/>
</dbReference>
<dbReference type="SMART" id="SM00407">
    <property type="entry name" value="IGc1"/>
    <property type="match status" value="1"/>
</dbReference>
<dbReference type="SUPFAM" id="SSF48726">
    <property type="entry name" value="Immunoglobulin"/>
    <property type="match status" value="1"/>
</dbReference>
<dbReference type="PROSITE" id="PS50835">
    <property type="entry name" value="IG_LIKE"/>
    <property type="match status" value="1"/>
</dbReference>
<dbReference type="PROSITE" id="PS00290">
    <property type="entry name" value="IG_MHC"/>
    <property type="match status" value="1"/>
</dbReference>
<reference key="1">
    <citation type="journal article" date="1993" name="Immunogenetics">
        <title>Isolation of a clone for pig beta 2-microglobulin cDNA.</title>
        <authorList>
            <person name="Milland J."/>
            <person name="Loveland B.E."/>
            <person name="McKenzie I.F.C."/>
        </authorList>
    </citation>
    <scope>NUCLEOTIDE SEQUENCE [MRNA]</scope>
</reference>
<reference key="2">
    <citation type="journal article" date="1996" name="Mamm. Genome">
        <title>Evaluation and characterization of a porcine small intestine cDNA library: analysis of 839 clones.</title>
        <authorList>
            <person name="Winteroe A.K."/>
            <person name="Fredholm M."/>
            <person name="Davies W."/>
        </authorList>
    </citation>
    <scope>NUCLEOTIDE SEQUENCE [LARGE SCALE MRNA]</scope>
    <source>
        <tissue>Small intestine</tissue>
    </source>
</reference>
<reference key="3">
    <citation type="submission" date="2001-11" db="EMBL/GenBank/DDBJ databases">
        <title>Sus scrofa beta-2-microglobulin (B2M) gene.</title>
        <authorList>
            <person name="Keene C.D."/>
            <person name="Ni H.-T."/>
            <person name="Low W.C."/>
        </authorList>
    </citation>
    <scope>NUCLEOTIDE SEQUENCE [GENOMIC DNA]</scope>
    <source>
        <tissue>Blood</tissue>
    </source>
</reference>
<feature type="signal peptide" evidence="1">
    <location>
        <begin position="1"/>
        <end position="20"/>
    </location>
</feature>
<feature type="chain" id="PRO_0000018787" description="Beta-2-microglobulin">
    <location>
        <begin position="21"/>
        <end position="118"/>
    </location>
</feature>
<feature type="domain" description="Ig-like C1-type">
    <location>
        <begin position="25"/>
        <end position="112"/>
    </location>
</feature>
<feature type="disulfide bond" evidence="2">
    <location>
        <begin position="45"/>
        <end position="99"/>
    </location>
</feature>
<feature type="sequence conflict" description="In Ref. 2; CAA23304." evidence="3" ref="2">
    <original>Q</original>
    <variation>S</variation>
    <location>
        <position position="70"/>
    </location>
</feature>
<feature type="sequence conflict" description="In Ref. 3; AAL48289." evidence="3" ref="3">
    <original>V</original>
    <variation>A</variation>
    <location>
        <position position="85"/>
    </location>
</feature>
<feature type="strand" evidence="4">
    <location>
        <begin position="26"/>
        <end position="33"/>
    </location>
</feature>
<feature type="strand" evidence="4">
    <location>
        <begin position="41"/>
        <end position="53"/>
    </location>
</feature>
<feature type="strand" evidence="4">
    <location>
        <begin position="56"/>
        <end position="61"/>
    </location>
</feature>
<feature type="strand" evidence="4">
    <location>
        <begin position="81"/>
        <end position="89"/>
    </location>
</feature>
<feature type="strand" evidence="4">
    <location>
        <begin position="97"/>
        <end position="102"/>
    </location>
</feature>
<feature type="strand" evidence="4">
    <location>
        <begin position="110"/>
        <end position="113"/>
    </location>
</feature>
<gene>
    <name type="primary">B2M</name>
</gene>